<comment type="function">
    <text evidence="2 3 5">Component of the elongator complex which is required for multiple tRNA modifications, including mcm5U (5-methoxycarbonylmethyl uridine), mcm5s2U (5-methoxycarbonylmethyl-2-thiouridine), and ncm5U (5-carbamoylmethyl uridine) (By similarity). The elongator complex catalyzes formation of carboxymethyluridine in the wobble base at position 34 in tRNAs (By similarity). Promotes organ development by modulating cell division rate. Prevents abscisic acid (ABA) signaling leading to stomatal closure and seedling growth inhibition. Involved in oxidative stress signaling. Prevents anthocyanin accumulation. Accelerator of defense gene induction required for rapid defense gene induction, and for the establishment of both basal and effector-triggered immunity (ETI), in a NPR1-independent manner, but is not required for systemic acquired resistance (SAR) establishment (PubMed:19500300, PubMed:20807211).</text>
</comment>
<comment type="pathway">
    <text evidence="2">tRNA modification; 5-methoxycarbonylmethyl-2-thiouridine-tRNA biosynthesis.</text>
</comment>
<comment type="subunit">
    <text evidence="4">Component of the elongator complex which consists of ELP1/ELO2, ELP2, ELP3/ELO3, ELP4/ELO1, ELP5, and ELP6.</text>
</comment>
<comment type="subcellular location">
    <subcellularLocation>
        <location evidence="2">Cytoplasm</location>
    </subcellularLocation>
    <subcellularLocation>
        <location evidence="2">Nucleus</location>
    </subcellularLocation>
</comment>
<comment type="alternative products">
    <event type="alternative splicing"/>
    <isoform>
        <id>F4I1S7-1</id>
        <name>1</name>
        <sequence type="displayed"/>
    </isoform>
    <text>Additional isoforms seem to exist.</text>
</comment>
<comment type="tissue specificity">
    <text evidence="3">Expressed in leaves, stems, roots, flowers, siliques and guard cells.</text>
</comment>
<comment type="domain">
    <text evidence="1">Folds into a two seven-bladed beta-propeller structure which is required for elongator complex assembly.</text>
</comment>
<comment type="disruption phenotype">
    <text evidence="3 5">Narrow leaves and reduced root growth that results from a decreased cell division rate. Increased abscisic acid (ABA) sensitivity and drought tolerance. Higher resistance to oxidative stress mediated by methyl viologen (MV) that blocks electron transport during photosynthesis and by CsCl in light. Accumulates anthocyanins. Reduced defense gene induction kinetics and salicylic acid (SA) accumulation mediated by pathogens (e.g. Pseudomonas syringae pv. maculicola) accompanied by an enhanced susceptibility in npr1 deficient plants.</text>
</comment>
<comment type="miscellaneous">
    <molecule>Isoform 1</molecule>
    <text>No experimental confirmation available.</text>
</comment>
<comment type="similarity">
    <text evidence="6">Belongs to the WD repeat ELP2 family.</text>
</comment>
<comment type="caution">
    <text evidence="2">The elongator complex was originally thought to play a role in transcription elongation. However, it is no longer thought to play a direct role in this process and its primary function is thought to be in tRNA modification.</text>
</comment>
<comment type="sequence caution" evidence="6">
    <conflict type="erroneous gene model prediction">
        <sequence resource="EMBL-CDS" id="AAD43147"/>
    </conflict>
</comment>
<comment type="sequence caution" evidence="6">
    <conflict type="erroneous gene model prediction">
        <sequence resource="EMBL-CDS" id="BAA23158"/>
    </conflict>
</comment>
<sequence>MSENTKVEAKRVFIGAGCNRVVNNVSWGASGLVSFGAQNAVAVFCPKTAQILTTLPGHKASVNCTHWLPTSKFAFKAKKLDRQYLLSGDSDGIIILWELSTLNNDWRHVLQLPLSHKKGVTCITAYMVSETDAMFASASSDGVVNVWDVSFPSQPSEECKVVCLDSICVDTKAIVTLSLAELPQNPGRFALALGGLDNKIKLYSGERTGKFTSVCELKGHTDWIRSLDFSLPLHTTEEIPNSIMLVSSSQDKVIRIWKLVLVGDVGSWRREITLASYIEGPVFVSGTFTYQISVESVLIGHEDWVYSVEWQPPVIDFIDGRLVNHQPLSILSASMDKTMMIWRPEKKTGVWVNVVCVGELSHCALGFYGGHWSPNSLSILAHGYGGAFHLWRNVSSSKESENWQMQKVPSGHFAAVTDVTWARTGEYLLSVSQDQTTRVFSAWKNDEGNEAEDEHWHELARPQVHGHDINCVAMVQGKGNHRFVSGAEEKVVRVFEAPLSFLKTLNHTCAGGEGSFPEDLQADVQVLGANMSALGLSQKPIYLHSSSEPLERNGGGEGLDTFETVPEAAPAELKEPPIEDQLAFHTLWPESHKLYGHGNELFSLCSDHKGNLVASSCKAQSASMAEIWLWEVGTWKAVGRLQSHSLTVTHLEFSYDDTLLLSVSRDRHFSVFSIQRTDNGEVSHKLMAKVEAHKRIIWACSWNPFGHQFATSSRDKTVKIWSVENDARIKQILVLPPFGSSVTAVAWTGLDRNEKSGCVAVGMESGLIELSNVKIIETEEGTTATAALALRLEPFMCHVSAVNRLAWRPTEKCESNQSLRWLTSCGDDNCVRVFNFKF</sequence>
<evidence type="ECO:0000250" key="1">
    <source>
        <dbReference type="UniProtKB" id="P42935"/>
    </source>
</evidence>
<evidence type="ECO:0000250" key="2">
    <source>
        <dbReference type="UniProtKB" id="Q6IA86"/>
    </source>
</evidence>
<evidence type="ECO:0000269" key="3">
    <source>
    </source>
</evidence>
<evidence type="ECO:0000269" key="4">
    <source>
    </source>
</evidence>
<evidence type="ECO:0000269" key="5">
    <source>
    </source>
</evidence>
<evidence type="ECO:0000305" key="6"/>
<protein>
    <recommendedName>
        <fullName>Elongator complex protein 2</fullName>
        <shortName>AtELP2</shortName>
    </recommendedName>
    <alternativeName>
        <fullName>Elongator component 2</fullName>
    </alternativeName>
    <alternativeName>
        <fullName>Protein GREEN NPR1 SEEDLING ON SA MEDIUM 1</fullName>
    </alternativeName>
</protein>
<dbReference type="EMBL" id="AC007504">
    <property type="protein sequence ID" value="AAD43147.1"/>
    <property type="status" value="ALT_SEQ"/>
    <property type="molecule type" value="Genomic_DNA"/>
</dbReference>
<dbReference type="EMBL" id="CP002684">
    <property type="protein sequence ID" value="AEE32440.1"/>
    <property type="molecule type" value="Genomic_DNA"/>
</dbReference>
<dbReference type="EMBL" id="AK226658">
    <property type="protein sequence ID" value="BAE98766.1"/>
    <property type="molecule type" value="mRNA"/>
</dbReference>
<dbReference type="EMBL" id="AB000835">
    <property type="protein sequence ID" value="BAA23158.1"/>
    <property type="status" value="ALT_SEQ"/>
    <property type="molecule type" value="Genomic_DNA"/>
</dbReference>
<dbReference type="RefSeq" id="NP_175377.2">
    <molecule id="F4I1S7-1"/>
    <property type="nucleotide sequence ID" value="NM_103842.3"/>
</dbReference>
<dbReference type="SMR" id="F4I1S7"/>
<dbReference type="FunCoup" id="F4I1S7">
    <property type="interactions" value="4088"/>
</dbReference>
<dbReference type="STRING" id="3702.F4I1S7"/>
<dbReference type="PaxDb" id="3702-AT1G49540.2"/>
<dbReference type="ProteomicsDB" id="222287">
    <molecule id="F4I1S7-1"/>
</dbReference>
<dbReference type="EnsemblPlants" id="AT1G49540.1">
    <molecule id="F4I1S7-1"/>
    <property type="protein sequence ID" value="AT1G49540.1"/>
    <property type="gene ID" value="AT1G49540"/>
</dbReference>
<dbReference type="GeneID" id="841378"/>
<dbReference type="Gramene" id="AT1G49540.1">
    <molecule id="F4I1S7-1"/>
    <property type="protein sequence ID" value="AT1G49540.1"/>
    <property type="gene ID" value="AT1G49540"/>
</dbReference>
<dbReference type="KEGG" id="ath:AT1G49540"/>
<dbReference type="Araport" id="AT1G49540"/>
<dbReference type="TAIR" id="AT1G49540">
    <property type="gene designation" value="ELP2"/>
</dbReference>
<dbReference type="eggNOG" id="KOG1063">
    <property type="taxonomic scope" value="Eukaryota"/>
</dbReference>
<dbReference type="HOGENOM" id="CLU_006430_2_0_1"/>
<dbReference type="InParanoid" id="F4I1S7"/>
<dbReference type="OMA" id="ENFRHIS"/>
<dbReference type="UniPathway" id="UPA00988"/>
<dbReference type="PRO" id="PR:F4I1S7"/>
<dbReference type="Proteomes" id="UP000006548">
    <property type="component" value="Chromosome 1"/>
</dbReference>
<dbReference type="ExpressionAtlas" id="F4I1S7">
    <property type="expression patterns" value="baseline and differential"/>
</dbReference>
<dbReference type="GO" id="GO:0005737">
    <property type="term" value="C:cytoplasm"/>
    <property type="evidence" value="ECO:0007669"/>
    <property type="project" value="UniProtKB-SubCell"/>
</dbReference>
<dbReference type="GO" id="GO:0033588">
    <property type="term" value="C:elongator holoenzyme complex"/>
    <property type="evidence" value="ECO:0000314"/>
    <property type="project" value="UniProtKB"/>
</dbReference>
<dbReference type="GO" id="GO:0005634">
    <property type="term" value="C:nucleus"/>
    <property type="evidence" value="ECO:0007669"/>
    <property type="project" value="UniProtKB-SubCell"/>
</dbReference>
<dbReference type="GO" id="GO:0009738">
    <property type="term" value="P:abscisic acid-activated signaling pathway"/>
    <property type="evidence" value="ECO:0007669"/>
    <property type="project" value="UniProtKB-KW"/>
</dbReference>
<dbReference type="GO" id="GO:0006952">
    <property type="term" value="P:defense response"/>
    <property type="evidence" value="ECO:0007669"/>
    <property type="project" value="UniProtKB-KW"/>
</dbReference>
<dbReference type="GO" id="GO:0031538">
    <property type="term" value="P:negative regulation of anthocyanin metabolic process"/>
    <property type="evidence" value="ECO:0000315"/>
    <property type="project" value="UniProtKB"/>
</dbReference>
<dbReference type="GO" id="GO:0008284">
    <property type="term" value="P:positive regulation of cell population proliferation"/>
    <property type="evidence" value="ECO:0000315"/>
    <property type="project" value="UniProtKB"/>
</dbReference>
<dbReference type="GO" id="GO:0031349">
    <property type="term" value="P:positive regulation of defense response"/>
    <property type="evidence" value="ECO:0000315"/>
    <property type="project" value="UniProtKB"/>
</dbReference>
<dbReference type="GO" id="GO:2000024">
    <property type="term" value="P:regulation of leaf development"/>
    <property type="evidence" value="ECO:0000315"/>
    <property type="project" value="UniProtKB"/>
</dbReference>
<dbReference type="GO" id="GO:0009737">
    <property type="term" value="P:response to abscisic acid"/>
    <property type="evidence" value="ECO:0000315"/>
    <property type="project" value="UniProtKB"/>
</dbReference>
<dbReference type="GO" id="GO:0006979">
    <property type="term" value="P:response to oxidative stress"/>
    <property type="evidence" value="ECO:0000315"/>
    <property type="project" value="UniProtKB"/>
</dbReference>
<dbReference type="GO" id="GO:0002098">
    <property type="term" value="P:tRNA wobble uridine modification"/>
    <property type="evidence" value="ECO:0007669"/>
    <property type="project" value="InterPro"/>
</dbReference>
<dbReference type="FunFam" id="2.130.10.10:FF:002211">
    <property type="entry name" value="Elongator complex protein 2"/>
    <property type="match status" value="1"/>
</dbReference>
<dbReference type="FunFam" id="2.130.10.10:FF:003515">
    <property type="entry name" value="Elongator complex protein 2"/>
    <property type="match status" value="1"/>
</dbReference>
<dbReference type="FunFam" id="2.130.10.10:FF:003518">
    <property type="entry name" value="Elongator complex protein 2"/>
    <property type="match status" value="1"/>
</dbReference>
<dbReference type="FunFam" id="2.130.10.10:FF:001077">
    <property type="entry name" value="Elongator protein 2"/>
    <property type="match status" value="1"/>
</dbReference>
<dbReference type="Gene3D" id="2.130.10.10">
    <property type="entry name" value="YVTN repeat-like/Quinoprotein amine dehydrogenase"/>
    <property type="match status" value="5"/>
</dbReference>
<dbReference type="InterPro" id="IPR037289">
    <property type="entry name" value="Elp2"/>
</dbReference>
<dbReference type="InterPro" id="IPR020472">
    <property type="entry name" value="G-protein_beta_WD-40_rep"/>
</dbReference>
<dbReference type="InterPro" id="IPR015943">
    <property type="entry name" value="WD40/YVTN_repeat-like_dom_sf"/>
</dbReference>
<dbReference type="InterPro" id="IPR036322">
    <property type="entry name" value="WD40_repeat_dom_sf"/>
</dbReference>
<dbReference type="InterPro" id="IPR001680">
    <property type="entry name" value="WD40_rpt"/>
</dbReference>
<dbReference type="PANTHER" id="PTHR44111">
    <property type="entry name" value="ELONGATOR COMPLEX PROTEIN 2"/>
    <property type="match status" value="1"/>
</dbReference>
<dbReference type="PANTHER" id="PTHR44111:SF1">
    <property type="entry name" value="ELONGATOR COMPLEX PROTEIN 2"/>
    <property type="match status" value="1"/>
</dbReference>
<dbReference type="Pfam" id="PF00400">
    <property type="entry name" value="WD40"/>
    <property type="match status" value="8"/>
</dbReference>
<dbReference type="PRINTS" id="PR00320">
    <property type="entry name" value="GPROTEINBRPT"/>
</dbReference>
<dbReference type="SMART" id="SM00320">
    <property type="entry name" value="WD40"/>
    <property type="match status" value="10"/>
</dbReference>
<dbReference type="SUPFAM" id="SSF50978">
    <property type="entry name" value="WD40 repeat-like"/>
    <property type="match status" value="2"/>
</dbReference>
<dbReference type="PROSITE" id="PS00678">
    <property type="entry name" value="WD_REPEATS_1"/>
    <property type="match status" value="1"/>
</dbReference>
<dbReference type="PROSITE" id="PS50082">
    <property type="entry name" value="WD_REPEATS_2"/>
    <property type="match status" value="4"/>
</dbReference>
<dbReference type="PROSITE" id="PS50294">
    <property type="entry name" value="WD_REPEATS_REGION"/>
    <property type="match status" value="2"/>
</dbReference>
<feature type="chain" id="PRO_0000416789" description="Elongator complex protein 2">
    <location>
        <begin position="1"/>
        <end position="838"/>
    </location>
</feature>
<feature type="repeat" description="WD 1">
    <location>
        <begin position="17"/>
        <end position="56"/>
    </location>
</feature>
<feature type="repeat" description="WD 2">
    <location>
        <begin position="57"/>
        <end position="107"/>
    </location>
</feature>
<feature type="repeat" description="WD 3">
    <location>
        <begin position="115"/>
        <end position="157"/>
    </location>
</feature>
<feature type="repeat" description="WD 4">
    <location>
        <begin position="174"/>
        <end position="213"/>
    </location>
</feature>
<feature type="repeat" description="WD 5">
    <location>
        <begin position="219"/>
        <end position="267"/>
    </location>
</feature>
<feature type="repeat" description="WD 6">
    <location>
        <begin position="300"/>
        <end position="352"/>
    </location>
</feature>
<feature type="repeat" description="WD 7">
    <location>
        <begin position="361"/>
        <end position="401"/>
    </location>
</feature>
<feature type="repeat" description="WD 8">
    <location>
        <begin position="411"/>
        <end position="450"/>
    </location>
</feature>
<feature type="repeat" description="WD 9">
    <location>
        <begin position="464"/>
        <end position="505"/>
    </location>
</feature>
<feature type="repeat" description="WD 10">
    <location>
        <begin position="596"/>
        <end position="640"/>
    </location>
</feature>
<feature type="repeat" description="WD 11">
    <location>
        <begin position="643"/>
        <end position="682"/>
    </location>
</feature>
<feature type="repeat" description="WD 12">
    <location>
        <begin position="692"/>
        <end position="731"/>
    </location>
</feature>
<feature type="repeat" description="WD 13">
    <location>
        <begin position="737"/>
        <end position="781"/>
    </location>
</feature>
<feature type="repeat" description="WD 14">
    <location>
        <begin position="797"/>
        <end position="835"/>
    </location>
</feature>
<feature type="sequence conflict" description="In Ref. 4; BAA23158." evidence="6" ref="4">
    <original>S</original>
    <variation>W</variation>
    <location>
        <position position="771"/>
    </location>
</feature>
<feature type="sequence conflict" description="In Ref. 3; BAE98766." evidence="6" ref="3">
    <original>R</original>
    <variation>Q</variation>
    <location>
        <position position="820"/>
    </location>
</feature>
<keyword id="KW-0938">Abscisic acid signaling pathway</keyword>
<keyword id="KW-0025">Alternative splicing</keyword>
<keyword id="KW-0963">Cytoplasm</keyword>
<keyword id="KW-0539">Nucleus</keyword>
<keyword id="KW-0611">Plant defense</keyword>
<keyword id="KW-1185">Reference proteome</keyword>
<keyword id="KW-0677">Repeat</keyword>
<keyword id="KW-0819">tRNA processing</keyword>
<keyword id="KW-0853">WD repeat</keyword>
<accession>F4I1S7</accession>
<accession>O22044</accession>
<accession>Q0WVT2</accession>
<accession>Q9XIC1</accession>
<gene>
    <name type="primary">ELP2</name>
    <name type="synonym">GNS1</name>
    <name type="ordered locus">At1g49540</name>
    <name type="ORF">F13F21.2</name>
    <name type="ORF">F14J22.24</name>
</gene>
<organism>
    <name type="scientific">Arabidopsis thaliana</name>
    <name type="common">Mouse-ear cress</name>
    <dbReference type="NCBI Taxonomy" id="3702"/>
    <lineage>
        <taxon>Eukaryota</taxon>
        <taxon>Viridiplantae</taxon>
        <taxon>Streptophyta</taxon>
        <taxon>Embryophyta</taxon>
        <taxon>Tracheophyta</taxon>
        <taxon>Spermatophyta</taxon>
        <taxon>Magnoliopsida</taxon>
        <taxon>eudicotyledons</taxon>
        <taxon>Gunneridae</taxon>
        <taxon>Pentapetalae</taxon>
        <taxon>rosids</taxon>
        <taxon>malvids</taxon>
        <taxon>Brassicales</taxon>
        <taxon>Brassicaceae</taxon>
        <taxon>Camelineae</taxon>
        <taxon>Arabidopsis</taxon>
    </lineage>
</organism>
<name>ELP2_ARATH</name>
<reference key="1">
    <citation type="journal article" date="2000" name="Nature">
        <title>Sequence and analysis of chromosome 1 of the plant Arabidopsis thaliana.</title>
        <authorList>
            <person name="Theologis A."/>
            <person name="Ecker J.R."/>
            <person name="Palm C.J."/>
            <person name="Federspiel N.A."/>
            <person name="Kaul S."/>
            <person name="White O."/>
            <person name="Alonso J."/>
            <person name="Altafi H."/>
            <person name="Araujo R."/>
            <person name="Bowman C.L."/>
            <person name="Brooks S.Y."/>
            <person name="Buehler E."/>
            <person name="Chan A."/>
            <person name="Chao Q."/>
            <person name="Chen H."/>
            <person name="Cheuk R.F."/>
            <person name="Chin C.W."/>
            <person name="Chung M.K."/>
            <person name="Conn L."/>
            <person name="Conway A.B."/>
            <person name="Conway A.R."/>
            <person name="Creasy T.H."/>
            <person name="Dewar K."/>
            <person name="Dunn P."/>
            <person name="Etgu P."/>
            <person name="Feldblyum T.V."/>
            <person name="Feng J.-D."/>
            <person name="Fong B."/>
            <person name="Fujii C.Y."/>
            <person name="Gill J.E."/>
            <person name="Goldsmith A.D."/>
            <person name="Haas B."/>
            <person name="Hansen N.F."/>
            <person name="Hughes B."/>
            <person name="Huizar L."/>
            <person name="Hunter J.L."/>
            <person name="Jenkins J."/>
            <person name="Johnson-Hopson C."/>
            <person name="Khan S."/>
            <person name="Khaykin E."/>
            <person name="Kim C.J."/>
            <person name="Koo H.L."/>
            <person name="Kremenetskaia I."/>
            <person name="Kurtz D.B."/>
            <person name="Kwan A."/>
            <person name="Lam B."/>
            <person name="Langin-Hooper S."/>
            <person name="Lee A."/>
            <person name="Lee J.M."/>
            <person name="Lenz C.A."/>
            <person name="Li J.H."/>
            <person name="Li Y.-P."/>
            <person name="Lin X."/>
            <person name="Liu S.X."/>
            <person name="Liu Z.A."/>
            <person name="Luros J.S."/>
            <person name="Maiti R."/>
            <person name="Marziali A."/>
            <person name="Militscher J."/>
            <person name="Miranda M."/>
            <person name="Nguyen M."/>
            <person name="Nierman W.C."/>
            <person name="Osborne B.I."/>
            <person name="Pai G."/>
            <person name="Peterson J."/>
            <person name="Pham P.K."/>
            <person name="Rizzo M."/>
            <person name="Rooney T."/>
            <person name="Rowley D."/>
            <person name="Sakano H."/>
            <person name="Salzberg S.L."/>
            <person name="Schwartz J.R."/>
            <person name="Shinn P."/>
            <person name="Southwick A.M."/>
            <person name="Sun H."/>
            <person name="Tallon L.J."/>
            <person name="Tambunga G."/>
            <person name="Toriumi M.J."/>
            <person name="Town C.D."/>
            <person name="Utterback T."/>
            <person name="Van Aken S."/>
            <person name="Vaysberg M."/>
            <person name="Vysotskaia V.S."/>
            <person name="Walker M."/>
            <person name="Wu D."/>
            <person name="Yu G."/>
            <person name="Fraser C.M."/>
            <person name="Venter J.C."/>
            <person name="Davis R.W."/>
        </authorList>
    </citation>
    <scope>NUCLEOTIDE SEQUENCE [LARGE SCALE GENOMIC DNA]</scope>
    <source>
        <strain>cv. Columbia</strain>
    </source>
</reference>
<reference key="2">
    <citation type="journal article" date="2017" name="Plant J.">
        <title>Araport11: a complete reannotation of the Arabidopsis thaliana reference genome.</title>
        <authorList>
            <person name="Cheng C.Y."/>
            <person name="Krishnakumar V."/>
            <person name="Chan A.P."/>
            <person name="Thibaud-Nissen F."/>
            <person name="Schobel S."/>
            <person name="Town C.D."/>
        </authorList>
    </citation>
    <scope>GENOME REANNOTATION</scope>
    <source>
        <strain>cv. Columbia</strain>
    </source>
</reference>
<reference key="3">
    <citation type="submission" date="2006-07" db="EMBL/GenBank/DDBJ databases">
        <title>Large-scale analysis of RIKEN Arabidopsis full-length (RAFL) cDNAs.</title>
        <authorList>
            <person name="Totoki Y."/>
            <person name="Seki M."/>
            <person name="Ishida J."/>
            <person name="Nakajima M."/>
            <person name="Enju A."/>
            <person name="Kamiya A."/>
            <person name="Narusaka M."/>
            <person name="Shin-i T."/>
            <person name="Nakagawa M."/>
            <person name="Sakamoto N."/>
            <person name="Oishi K."/>
            <person name="Kohara Y."/>
            <person name="Kobayashi M."/>
            <person name="Toyoda A."/>
            <person name="Sakaki Y."/>
            <person name="Sakurai T."/>
            <person name="Iida K."/>
            <person name="Akiyama K."/>
            <person name="Satou M."/>
            <person name="Toyoda T."/>
            <person name="Konagaya A."/>
            <person name="Carninci P."/>
            <person name="Kawai J."/>
            <person name="Hayashizaki Y."/>
            <person name="Shinozaki K."/>
        </authorList>
    </citation>
    <scope>NUCLEOTIDE SEQUENCE [LARGE SCALE MRNA]</scope>
    <source>
        <strain>cv. Columbia</strain>
    </source>
</reference>
<reference key="4">
    <citation type="journal article" date="1997" name="Plant Mol. Biol.">
        <title>Geranylgeranyl pyrophosphate synthase encoded by the newly isolated gene GGPS6 from Arabidopsis thaliana is localized in mitochondria.</title>
        <authorList>
            <person name="Zhu X."/>
            <person name="Suzuki K."/>
            <person name="Saito T."/>
            <person name="Okada K."/>
            <person name="Tanaka K."/>
            <person name="Nakagawa T."/>
            <person name="Matsuda H."/>
            <person name="Kawamukai M."/>
        </authorList>
    </citation>
    <scope>NUCLEOTIDE SEQUENCE [GENOMIC DNA] OF 515-838</scope>
</reference>
<reference key="5">
    <citation type="journal article" date="2009" name="Plant J.">
        <title>Elongator mediates ABA responses, oxidative stress resistance and anthocyanin biosynthesis in Arabidopsis.</title>
        <authorList>
            <person name="Zhou X."/>
            <person name="Hua D."/>
            <person name="Chen Z."/>
            <person name="Zhou Z."/>
            <person name="Gong Z."/>
        </authorList>
    </citation>
    <scope>FUNCTION</scope>
    <scope>DISRUPTION PHENOTYPE</scope>
    <scope>TISSUE SPECIFICITY</scope>
</reference>
<reference key="6">
    <citation type="journal article" date="2010" name="Plant J.">
        <title>Elongator subunit 2 is an accelerator of immune responses in Arabidopsis thaliana.</title>
        <authorList>
            <person name="DeFraia C.T."/>
            <person name="Zhang X."/>
            <person name="Mou Z."/>
        </authorList>
    </citation>
    <scope>FUNCTION</scope>
    <scope>DISRUPTION PHENOTYPE</scope>
    <source>
        <strain>cv. Columbia</strain>
    </source>
</reference>
<reference key="7">
    <citation type="journal article" date="2010" name="Proc. Natl. Acad. Sci. U.S.A.">
        <title>Plant Elongator regulates auxin-related genes during RNA polymerase II transcription elongation.</title>
        <authorList>
            <person name="Nelissen H."/>
            <person name="De Groeve S."/>
            <person name="Fleury D."/>
            <person name="Neyt P."/>
            <person name="Bruno L."/>
            <person name="Bitonti M.B."/>
            <person name="Vandenbussche F."/>
            <person name="Van der Straeten D."/>
            <person name="Yamaguchi T."/>
            <person name="Tsukaya H."/>
            <person name="Witters E."/>
            <person name="De Jaeger G."/>
            <person name="Houben A."/>
            <person name="Van Lijsebettens M."/>
        </authorList>
    </citation>
    <scope>SUBUNIT</scope>
</reference>
<proteinExistence type="evidence at protein level"/>